<dbReference type="EC" id="5.4.99.25" evidence="2 8"/>
<dbReference type="EMBL" id="X13270">
    <property type="protein sequence ID" value="CAA31635.1"/>
    <property type="molecule type" value="Genomic_DNA"/>
</dbReference>
<dbReference type="EMBL" id="X13775">
    <property type="protein sequence ID" value="CAA32021.1"/>
    <property type="molecule type" value="Genomic_DNA"/>
</dbReference>
<dbReference type="EMBL" id="U18997">
    <property type="protein sequence ID" value="AAA57969.1"/>
    <property type="molecule type" value="Genomic_DNA"/>
</dbReference>
<dbReference type="EMBL" id="U00096">
    <property type="protein sequence ID" value="AAC76200.1"/>
    <property type="molecule type" value="Genomic_DNA"/>
</dbReference>
<dbReference type="EMBL" id="AP009048">
    <property type="protein sequence ID" value="BAE77212.1"/>
    <property type="molecule type" value="Genomic_DNA"/>
</dbReference>
<dbReference type="EMBL" id="S79856">
    <property type="protein sequence ID" value="AAB35645.1"/>
    <property type="molecule type" value="Genomic_DNA"/>
</dbReference>
<dbReference type="PIR" id="S01916">
    <property type="entry name" value="Q9EC35"/>
</dbReference>
<dbReference type="RefSeq" id="NP_417635.1">
    <property type="nucleotide sequence ID" value="NC_000913.3"/>
</dbReference>
<dbReference type="RefSeq" id="WP_000089698.1">
    <property type="nucleotide sequence ID" value="NZ_STEB01000012.1"/>
</dbReference>
<dbReference type="PDB" id="1K8W">
    <property type="method" value="X-ray"/>
    <property type="resolution" value="1.85 A"/>
    <property type="chains" value="A=7-314"/>
</dbReference>
<dbReference type="PDB" id="1R3F">
    <property type="method" value="X-ray"/>
    <property type="resolution" value="1.85 A"/>
    <property type="chains" value="A=1-314"/>
</dbReference>
<dbReference type="PDB" id="1ZL3">
    <property type="method" value="X-ray"/>
    <property type="resolution" value="2.80 A"/>
    <property type="chains" value="A=10-314"/>
</dbReference>
<dbReference type="PDBsum" id="1K8W"/>
<dbReference type="PDBsum" id="1R3F"/>
<dbReference type="PDBsum" id="1ZL3"/>
<dbReference type="SMR" id="P60340"/>
<dbReference type="BioGRID" id="4262434">
    <property type="interactions" value="6"/>
</dbReference>
<dbReference type="FunCoup" id="P60340">
    <property type="interactions" value="680"/>
</dbReference>
<dbReference type="IntAct" id="P60340">
    <property type="interactions" value="5"/>
</dbReference>
<dbReference type="STRING" id="511145.b3166"/>
<dbReference type="jPOST" id="P60340"/>
<dbReference type="PaxDb" id="511145-b3166"/>
<dbReference type="EnsemblBacteria" id="AAC76200">
    <property type="protein sequence ID" value="AAC76200"/>
    <property type="gene ID" value="b3166"/>
</dbReference>
<dbReference type="GeneID" id="93778817"/>
<dbReference type="GeneID" id="947687"/>
<dbReference type="KEGG" id="ecj:JW3135"/>
<dbReference type="KEGG" id="eco:b3166"/>
<dbReference type="KEGG" id="ecoc:C3026_17245"/>
<dbReference type="PATRIC" id="fig|1411691.4.peg.3564"/>
<dbReference type="EchoBASE" id="EB1164"/>
<dbReference type="eggNOG" id="COG0130">
    <property type="taxonomic scope" value="Bacteria"/>
</dbReference>
<dbReference type="HOGENOM" id="CLU_032087_0_3_6"/>
<dbReference type="InParanoid" id="P60340"/>
<dbReference type="OMA" id="VDKPSGF"/>
<dbReference type="OrthoDB" id="9802309at2"/>
<dbReference type="PhylomeDB" id="P60340"/>
<dbReference type="BioCyc" id="EcoCyc:EG11177-MONOMER"/>
<dbReference type="BioCyc" id="MetaCyc:EG11177-MONOMER"/>
<dbReference type="BRENDA" id="5.4.99.25">
    <property type="organism ID" value="2026"/>
</dbReference>
<dbReference type="EvolutionaryTrace" id="P60340"/>
<dbReference type="PRO" id="PR:P60340"/>
<dbReference type="Proteomes" id="UP000000625">
    <property type="component" value="Chromosome"/>
</dbReference>
<dbReference type="GO" id="GO:0005829">
    <property type="term" value="C:cytosol"/>
    <property type="evidence" value="ECO:0000314"/>
    <property type="project" value="EcoCyc"/>
</dbReference>
<dbReference type="GO" id="GO:0009982">
    <property type="term" value="F:pseudouridine synthase activity"/>
    <property type="evidence" value="ECO:0000318"/>
    <property type="project" value="GO_Central"/>
</dbReference>
<dbReference type="GO" id="GO:0000049">
    <property type="term" value="F:tRNA binding"/>
    <property type="evidence" value="ECO:0000314"/>
    <property type="project" value="EcoCyc"/>
</dbReference>
<dbReference type="GO" id="GO:0106029">
    <property type="term" value="F:tRNA pseudouridine synthase activity"/>
    <property type="evidence" value="ECO:0000314"/>
    <property type="project" value="EcoCyc"/>
</dbReference>
<dbReference type="GO" id="GO:0160148">
    <property type="term" value="F:tRNA pseudouridine(55) synthase activity"/>
    <property type="evidence" value="ECO:0007669"/>
    <property type="project" value="UniProtKB-EC"/>
</dbReference>
<dbReference type="GO" id="GO:1990481">
    <property type="term" value="P:mRNA pseudouridine synthesis"/>
    <property type="evidence" value="ECO:0000318"/>
    <property type="project" value="GO_Central"/>
</dbReference>
<dbReference type="GO" id="GO:0061818">
    <property type="term" value="P:tRNA folding"/>
    <property type="evidence" value="ECO:0000315"/>
    <property type="project" value="EcoCyc"/>
</dbReference>
<dbReference type="GO" id="GO:0006400">
    <property type="term" value="P:tRNA modification"/>
    <property type="evidence" value="ECO:0000318"/>
    <property type="project" value="GO_Central"/>
</dbReference>
<dbReference type="GO" id="GO:0031119">
    <property type="term" value="P:tRNA pseudouridine synthesis"/>
    <property type="evidence" value="ECO:0000315"/>
    <property type="project" value="EcoCyc"/>
</dbReference>
<dbReference type="CDD" id="cd02573">
    <property type="entry name" value="PseudoU_synth_EcTruB"/>
    <property type="match status" value="1"/>
</dbReference>
<dbReference type="CDD" id="cd21152">
    <property type="entry name" value="PUA_TruB_bacterial"/>
    <property type="match status" value="1"/>
</dbReference>
<dbReference type="DisProt" id="DP03060"/>
<dbReference type="FunFam" id="2.30.130.10:FF:000004">
    <property type="entry name" value="tRNA pseudouridine synthase B"/>
    <property type="match status" value="1"/>
</dbReference>
<dbReference type="FunFam" id="3.30.2350.10:FF:000003">
    <property type="entry name" value="tRNA pseudouridine synthase B"/>
    <property type="match status" value="1"/>
</dbReference>
<dbReference type="Gene3D" id="3.30.2350.10">
    <property type="entry name" value="Pseudouridine synthase"/>
    <property type="match status" value="1"/>
</dbReference>
<dbReference type="Gene3D" id="2.30.130.10">
    <property type="entry name" value="PUA domain"/>
    <property type="match status" value="1"/>
</dbReference>
<dbReference type="HAMAP" id="MF_01080">
    <property type="entry name" value="TruB_bact"/>
    <property type="match status" value="1"/>
</dbReference>
<dbReference type="InterPro" id="IPR020103">
    <property type="entry name" value="PsdUridine_synth_cat_dom_sf"/>
</dbReference>
<dbReference type="InterPro" id="IPR002501">
    <property type="entry name" value="PsdUridine_synth_N"/>
</dbReference>
<dbReference type="InterPro" id="IPR015947">
    <property type="entry name" value="PUA-like_sf"/>
</dbReference>
<dbReference type="InterPro" id="IPR036974">
    <property type="entry name" value="PUA_sf"/>
</dbReference>
<dbReference type="InterPro" id="IPR014780">
    <property type="entry name" value="tRNA_psdUridine_synth_TruB"/>
</dbReference>
<dbReference type="InterPro" id="IPR015240">
    <property type="entry name" value="tRNA_sdUridine_synth_fam1_C"/>
</dbReference>
<dbReference type="InterPro" id="IPR032819">
    <property type="entry name" value="TruB_C"/>
</dbReference>
<dbReference type="NCBIfam" id="TIGR00431">
    <property type="entry name" value="TruB"/>
    <property type="match status" value="1"/>
</dbReference>
<dbReference type="PANTHER" id="PTHR13767:SF2">
    <property type="entry name" value="PSEUDOURIDYLATE SYNTHASE TRUB1"/>
    <property type="match status" value="1"/>
</dbReference>
<dbReference type="PANTHER" id="PTHR13767">
    <property type="entry name" value="TRNA-PSEUDOURIDINE SYNTHASE"/>
    <property type="match status" value="1"/>
</dbReference>
<dbReference type="Pfam" id="PF09157">
    <property type="entry name" value="TruB-C_2"/>
    <property type="match status" value="1"/>
</dbReference>
<dbReference type="Pfam" id="PF16198">
    <property type="entry name" value="TruB_C_2"/>
    <property type="match status" value="1"/>
</dbReference>
<dbReference type="Pfam" id="PF01509">
    <property type="entry name" value="TruB_N"/>
    <property type="match status" value="1"/>
</dbReference>
<dbReference type="SUPFAM" id="SSF55120">
    <property type="entry name" value="Pseudouridine synthase"/>
    <property type="match status" value="1"/>
</dbReference>
<dbReference type="SUPFAM" id="SSF88697">
    <property type="entry name" value="PUA domain-like"/>
    <property type="match status" value="1"/>
</dbReference>
<evidence type="ECO:0000250" key="1"/>
<evidence type="ECO:0000255" key="2">
    <source>
        <dbReference type="HAMAP-Rule" id="MF_01080"/>
    </source>
</evidence>
<evidence type="ECO:0000269" key="3">
    <source>
    </source>
</evidence>
<evidence type="ECO:0000269" key="4">
    <source>
    </source>
</evidence>
<evidence type="ECO:0000269" key="5">
    <source>
    </source>
</evidence>
<evidence type="ECO:0000269" key="6">
    <source>
    </source>
</evidence>
<evidence type="ECO:0000269" key="7">
    <source>
    </source>
</evidence>
<evidence type="ECO:0000269" key="8">
    <source>
    </source>
</evidence>
<evidence type="ECO:0000303" key="9">
    <source>
    </source>
</evidence>
<evidence type="ECO:0000305" key="10"/>
<evidence type="ECO:0000305" key="11">
    <source>
    </source>
</evidence>
<evidence type="ECO:0007829" key="12">
    <source>
        <dbReference type="PDB" id="1K8W"/>
    </source>
</evidence>
<comment type="function">
    <text evidence="2 5 8">Responsible for synthesis of pseudouridine from uracil-55 in the psi GC loop of transfer RNAs.</text>
</comment>
<comment type="catalytic activity">
    <reaction evidence="2 8">
        <text>uridine(55) in tRNA = pseudouridine(55) in tRNA</text>
        <dbReference type="Rhea" id="RHEA:42532"/>
        <dbReference type="Rhea" id="RHEA-COMP:10101"/>
        <dbReference type="Rhea" id="RHEA-COMP:10102"/>
        <dbReference type="ChEBI" id="CHEBI:65314"/>
        <dbReference type="ChEBI" id="CHEBI:65315"/>
        <dbReference type="EC" id="5.4.99.25"/>
    </reaction>
</comment>
<comment type="biophysicochemical properties">
    <kinetics>
        <KM evidence="6">148 nM for tRNA (at pH 7.5)</KM>
    </kinetics>
</comment>
<comment type="induction">
    <text evidence="7">Weakly expressed in maxicells, part of the metY operon that extends to pnp (PubMed:2849753).</text>
</comment>
<comment type="similarity">
    <text evidence="2 10">Belongs to the pseudouridine synthase TruB family. Type 1 subfamily.</text>
</comment>
<gene>
    <name type="primary">truB</name>
    <name type="synonym">yhbA</name>
    <name type="ordered locus">b3166</name>
    <name type="ordered locus">JW3135</name>
</gene>
<feature type="chain" id="PRO_0000121830" description="tRNA pseudouridine synthase B">
    <location>
        <begin position="1"/>
        <end position="314"/>
    </location>
</feature>
<feature type="region of interest" description="RNA binding" evidence="1">
    <location>
        <begin position="124"/>
        <end position="152"/>
    </location>
</feature>
<feature type="active site" description="Nucleophile" evidence="2 11">
    <location>
        <position position="48"/>
    </location>
</feature>
<feature type="binding site" evidence="2 11">
    <location>
        <position position="43"/>
    </location>
    <ligand>
        <name>substrate</name>
    </ligand>
</feature>
<feature type="binding site" evidence="2 11">
    <location>
        <position position="76"/>
    </location>
    <ligand>
        <name>substrate</name>
    </ligand>
</feature>
<feature type="binding site" evidence="2 11">
    <location>
        <position position="179"/>
    </location>
    <ligand>
        <name>substrate</name>
    </ligand>
</feature>
<feature type="binding site" evidence="2 11">
    <location>
        <position position="202"/>
    </location>
    <ligand>
        <name>substrate</name>
    </ligand>
</feature>
<feature type="mutagenesis site" description="Reduced structural stability and decrease in activity." evidence="4">
    <original>K</original>
    <variation>M</variation>
    <variation>R</variation>
    <location>
        <position position="19"/>
    </location>
</feature>
<feature type="mutagenesis site" description="Reduced structural stability and no change in activity." evidence="4">
    <original>P</original>
    <variation>G</variation>
    <variation>L</variation>
    <location>
        <position position="20"/>
    </location>
</feature>
<feature type="mutagenesis site" description="330-fold decrease in catalytic efficiency." evidence="6">
    <original>H</original>
    <variation>A</variation>
    <location>
        <position position="43"/>
    </location>
</feature>
<feature type="mutagenesis site" description="2-fold decrease in catalytic efficiency." evidence="6">
    <original>H</original>
    <variation>F</variation>
    <location>
        <position position="43"/>
    </location>
</feature>
<feature type="mutagenesis site" description="250-fold decrease in catalytic efficiency." evidence="6">
    <original>H</original>
    <variation>G</variation>
    <location>
        <position position="43"/>
    </location>
</feature>
<feature type="mutagenesis site" description="180-fold decrease in catalytic efficiency." evidence="6">
    <original>H</original>
    <variation>N</variation>
    <location>
        <position position="43"/>
    </location>
</feature>
<feature type="mutagenesis site" description="50-fold decrease in catalytic efficiency." evidence="6">
    <original>H</original>
    <variation>Q</variation>
    <location>
        <position position="43"/>
    </location>
</feature>
<feature type="mutagenesis site" description="Loss of activity." evidence="5">
    <original>D</original>
    <variation>C</variation>
    <location>
        <position position="48"/>
    </location>
</feature>
<feature type="mutagenesis site" description="Slight increase in activity. Slight increase in activity; when associated with A-174 and A-193." evidence="3">
    <original>C</original>
    <variation>A</variation>
    <location>
        <position position="58"/>
    </location>
</feature>
<feature type="mutagenesis site" description="Slight increase in activity. Slight increase in activity; when associated with A-58 and A-193." evidence="3">
    <original>C</original>
    <variation>A</variation>
    <location>
        <position position="174"/>
    </location>
</feature>
<feature type="mutagenesis site" description="Slight increase in activity; when associated with A-58 and A-174." evidence="3">
    <original>C</original>
    <variation>A</variation>
    <location>
        <position position="193"/>
    </location>
</feature>
<feature type="mutagenesis site" description="Slight increase in activity." evidence="3">
    <original>C</original>
    <variation>V</variation>
    <location>
        <position position="193"/>
    </location>
</feature>
<feature type="strand" evidence="12">
    <location>
        <begin position="13"/>
        <end position="19"/>
    </location>
</feature>
<feature type="helix" evidence="12">
    <location>
        <begin position="25"/>
        <end position="35"/>
    </location>
</feature>
<feature type="strand" evidence="12">
    <location>
        <begin position="41"/>
        <end position="45"/>
    </location>
</feature>
<feature type="strand" evidence="12">
    <location>
        <begin position="52"/>
        <end position="59"/>
    </location>
</feature>
<feature type="helix" evidence="12">
    <location>
        <begin position="60"/>
        <end position="66"/>
    </location>
</feature>
<feature type="helix" evidence="12">
    <location>
        <begin position="67"/>
        <end position="70"/>
    </location>
</feature>
<feature type="strand" evidence="12">
    <location>
        <begin position="74"/>
        <end position="82"/>
    </location>
</feature>
<feature type="strand" evidence="12">
    <location>
        <begin position="84"/>
        <end position="90"/>
    </location>
</feature>
<feature type="strand" evidence="12">
    <location>
        <begin position="95"/>
        <end position="98"/>
    </location>
</feature>
<feature type="helix" evidence="12">
    <location>
        <begin position="105"/>
        <end position="113"/>
    </location>
</feature>
<feature type="strand" evidence="12">
    <location>
        <begin position="116"/>
        <end position="121"/>
    </location>
</feature>
<feature type="strand" evidence="12">
    <location>
        <begin position="125"/>
        <end position="127"/>
    </location>
</feature>
<feature type="helix" evidence="12">
    <location>
        <begin position="136"/>
        <end position="141"/>
    </location>
</feature>
<feature type="strand" evidence="12">
    <location>
        <begin position="151"/>
        <end position="164"/>
    </location>
</feature>
<feature type="strand" evidence="12">
    <location>
        <begin position="167"/>
        <end position="174"/>
    </location>
</feature>
<feature type="helix" evidence="12">
    <location>
        <begin position="180"/>
        <end position="190"/>
    </location>
</feature>
<feature type="strand" evidence="12">
    <location>
        <begin position="195"/>
        <end position="205"/>
    </location>
</feature>
<feature type="helix" evidence="12">
    <location>
        <begin position="210"/>
        <end position="212"/>
    </location>
</feature>
<feature type="helix" evidence="12">
    <location>
        <begin position="216"/>
        <end position="228"/>
    </location>
</feature>
<feature type="helix" evidence="12">
    <location>
        <begin position="234"/>
        <end position="237"/>
    </location>
</feature>
<feature type="helix" evidence="12">
    <location>
        <begin position="238"/>
        <end position="240"/>
    </location>
</feature>
<feature type="helix" evidence="12">
    <location>
        <begin position="246"/>
        <end position="248"/>
    </location>
</feature>
<feature type="strand" evidence="12">
    <location>
        <begin position="253"/>
        <end position="256"/>
    </location>
</feature>
<feature type="helix" evidence="12">
    <location>
        <begin position="258"/>
        <end position="264"/>
    </location>
</feature>
<feature type="turn" evidence="12">
    <location>
        <begin position="265"/>
        <end position="267"/>
    </location>
</feature>
<feature type="strand" evidence="12">
    <location>
        <begin position="277"/>
        <end position="285"/>
    </location>
</feature>
<feature type="turn" evidence="12">
    <location>
        <begin position="286"/>
        <end position="289"/>
    </location>
</feature>
<feature type="strand" evidence="12">
    <location>
        <begin position="290"/>
        <end position="297"/>
    </location>
</feature>
<feature type="strand" evidence="12">
    <location>
        <begin position="303"/>
        <end position="308"/>
    </location>
</feature>
<keyword id="KW-0002">3D-structure</keyword>
<keyword id="KW-0903">Direct protein sequencing</keyword>
<keyword id="KW-0413">Isomerase</keyword>
<keyword id="KW-1185">Reference proteome</keyword>
<keyword id="KW-0819">tRNA processing</keyword>
<accession>P60340</accession>
<accession>P09171</accession>
<accession>P76671</accession>
<accession>Q2M944</accession>
<protein>
    <recommendedName>
        <fullName evidence="2">tRNA pseudouridine synthase B</fullName>
        <ecNumber evidence="2 8">5.4.99.25</ecNumber>
    </recommendedName>
    <alternativeName>
        <fullName evidence="9">Protein P35</fullName>
    </alternativeName>
    <alternativeName>
        <fullName evidence="2">tRNA pseudouridine(55) synthase</fullName>
        <shortName evidence="2">Psi55 synthase</shortName>
    </alternativeName>
    <alternativeName>
        <fullName evidence="2">tRNA pseudouridylate synthase</fullName>
    </alternativeName>
    <alternativeName>
        <fullName evidence="2">tRNA-uridine isomerase</fullName>
    </alternativeName>
</protein>
<reference key="1">
    <citation type="journal article" date="1988" name="Nucleic Acids Res.">
        <title>The existence of two genes between infB and rpsO in the Escherichia coli genome: DNA sequencing and S1 nuclease mapping.</title>
        <authorList>
            <person name="Sands J.F."/>
            <person name="Regnier P."/>
            <person name="Cummings H.S."/>
            <person name="Grunberg-Manago M."/>
            <person name="Hershey J.W.B."/>
        </authorList>
    </citation>
    <scope>NUCLEOTIDE SEQUENCE [GENOMIC DNA]</scope>
    <scope>INDUCTION</scope>
    <scope>OPERON</scope>
    <source>
        <strain>K12</strain>
    </source>
</reference>
<reference key="2">
    <citation type="journal article" date="1997" name="Science">
        <title>The complete genome sequence of Escherichia coli K-12.</title>
        <authorList>
            <person name="Blattner F.R."/>
            <person name="Plunkett G. III"/>
            <person name="Bloch C.A."/>
            <person name="Perna N.T."/>
            <person name="Burland V."/>
            <person name="Riley M."/>
            <person name="Collado-Vides J."/>
            <person name="Glasner J.D."/>
            <person name="Rode C.K."/>
            <person name="Mayhew G.F."/>
            <person name="Gregor J."/>
            <person name="Davis N.W."/>
            <person name="Kirkpatrick H.A."/>
            <person name="Goeden M.A."/>
            <person name="Rose D.J."/>
            <person name="Mau B."/>
            <person name="Shao Y."/>
        </authorList>
    </citation>
    <scope>NUCLEOTIDE SEQUENCE [LARGE SCALE GENOMIC DNA]</scope>
    <source>
        <strain>K12 / MG1655 / ATCC 47076</strain>
    </source>
</reference>
<reference key="3">
    <citation type="journal article" date="2006" name="Mol. Syst. Biol.">
        <title>Highly accurate genome sequences of Escherichia coli K-12 strains MG1655 and W3110.</title>
        <authorList>
            <person name="Hayashi K."/>
            <person name="Morooka N."/>
            <person name="Yamamoto Y."/>
            <person name="Fujita K."/>
            <person name="Isono K."/>
            <person name="Choi S."/>
            <person name="Ohtsubo E."/>
            <person name="Baba T."/>
            <person name="Wanner B.L."/>
            <person name="Mori H."/>
            <person name="Horiuchi T."/>
        </authorList>
    </citation>
    <scope>NUCLEOTIDE SEQUENCE [LARGE SCALE GENOMIC DNA]</scope>
    <source>
        <strain>K12 / W3110 / ATCC 27325 / DSM 5911</strain>
    </source>
</reference>
<reference key="4">
    <citation type="journal article" date="1995" name="RNA">
        <title>Purification, cloning, and properties of the tRNA psi 55 synthase from Escherichia coli.</title>
        <authorList>
            <person name="Nurse K."/>
            <person name="Wrzesisnski J."/>
            <person name="Bakin A."/>
            <person name="Lane B.G."/>
            <person name="Ofengand J."/>
        </authorList>
    </citation>
    <scope>NUCLEOTIDE SEQUENCE [GENOMIC DNA] OF 1-20</scope>
    <scope>PROTEIN SEQUENCE OF 6-20</scope>
    <scope>FUNCTION</scope>
    <scope>CATALYTIC ACTIVITY</scope>
    <scope>CHARACTERIZATION</scope>
</reference>
<reference key="5">
    <citation type="journal article" date="1999" name="Biochemistry">
        <title>Role of cysteine residues in pseudouridine synthases of different families.</title>
        <authorList>
            <person name="Ramamurthy V."/>
            <person name="Swann S.L."/>
            <person name="Spedaliere C.J."/>
            <person name="Mueller E.G."/>
        </authorList>
    </citation>
    <scope>MUTAGENESIS OF CYS-58; CYS-174 AND CYS-193</scope>
    <source>
        <strain>BLR-DE3</strain>
        <strain>K12 / JM109 / ATCC 53323</strain>
    </source>
</reference>
<reference key="6">
    <citation type="journal article" date="2000" name="Biochemistry">
        <title>Functional importance of motif I of pseudouridine synthases: mutagenesis of aligned lysine and proline residues.</title>
        <authorList>
            <person name="Spedaliere C.J."/>
            <person name="Hamilton C.S."/>
            <person name="Mueller E.G."/>
        </authorList>
    </citation>
    <scope>MUTAGENESIS OF LYS-19 AND PRO-20</scope>
    <source>
        <strain>BLR-DE3</strain>
    </source>
</reference>
<reference key="7">
    <citation type="journal article" date="2000" name="RNA">
        <title>Deletion of the Escherichia coli pseudouridine synthase gene truB blocks formation of pseudouridine 55 in tRNA in vivo, does not affect exponential growth, but confers a strong selective disadvantage in competition with wild-type cells.</title>
        <authorList>
            <person name="Gutgsell N."/>
            <person name="Englund N."/>
            <person name="Niu L."/>
            <person name="Kaya Y."/>
            <person name="Lane B.G."/>
            <person name="Ofengand J."/>
        </authorList>
    </citation>
    <scope>FUNCTION</scope>
    <scope>MUTAGENESIS OF ASP-48</scope>
    <source>
        <strain>BLR-DE3</strain>
        <strain>K12 / MG1655 / ATCC 47076</strain>
    </source>
</reference>
<reference key="8">
    <citation type="journal article" date="2005" name="Arch. Biochem. Biophys.">
        <title>The roles of the essential Asp-48 and highly conserved His-43 elucidated by the pH dependence of the pseudouridine synthase TruB.</title>
        <authorList>
            <person name="Hamilton C.S."/>
            <person name="Spedaliere C.J."/>
            <person name="Ginter J.M."/>
            <person name="Johnston M.V."/>
            <person name="Mueller E.G."/>
        </authorList>
    </citation>
    <scope>BIOPHYSICOCHEMICAL PROPERTIES</scope>
    <scope>MUTAGENESIS OF HIS-43</scope>
</reference>
<reference key="9">
    <citation type="journal article" date="2001" name="Cell">
        <title>Cocrystal structure of a tRNA Psi55 pseudouridine synthase: nucleotide flipping by an RNA-modifying enzyme.</title>
        <authorList>
            <person name="Hoang C."/>
            <person name="Ferre-D'Amare A.R."/>
        </authorList>
    </citation>
    <scope>X-RAY CRYSTALLOGRAPHY (1.85 ANGSTROMS) OF 10-314 IN COMPLEX WITH RNA</scope>
    <scope>ACTIVE SITE</scope>
</reference>
<reference key="10">
    <citation type="journal article" date="2003" name="Proc. Natl. Acad. Sci. U.S.A.">
        <title>Structure of tRNA pseudouridine synthase TruB and its RNA complex: RNA recognition through a combination of rigid docking and induced fit.</title>
        <authorList>
            <person name="Pan H."/>
            <person name="Agarwalla S."/>
            <person name="Moustakas D.T."/>
            <person name="Finer-Moore J."/>
            <person name="Stroud R.M."/>
        </authorList>
    </citation>
    <scope>X-RAY CRYSTALLOGRAPHY (1.85 ANGSTROMS) OF 1-314</scope>
</reference>
<proteinExistence type="evidence at protein level"/>
<sequence length="314" mass="35087">MSRPRRRGRDINGVLLLDKPQGMSSNDALQKVKRIYNANRAGHTGALDPLATGMLPICLGEATKFSQYLLDSDKRYRVIARLGQRTDTSDADGQIVEERPVTFSAEQLAAALDTFRGDIEQIPSMYSALKYQGKKLYEYARQGIEVPREARPITVYELLFIRHEGNELELEIHCSKGTYIRTIIDDLGEKLGCGAHVIYLRRLAVSKYPVERMVTLEHLRELVEQAEQQDIPAAELLDPLLMPMDSPASDYPVVNLPLTSSVYFKNGNPVRTSGAPLEGLVRVTEGENGKFIGMGEIDDEGRVAPRRLVVEYPA</sequence>
<organism>
    <name type="scientific">Escherichia coli (strain K12)</name>
    <dbReference type="NCBI Taxonomy" id="83333"/>
    <lineage>
        <taxon>Bacteria</taxon>
        <taxon>Pseudomonadati</taxon>
        <taxon>Pseudomonadota</taxon>
        <taxon>Gammaproteobacteria</taxon>
        <taxon>Enterobacterales</taxon>
        <taxon>Enterobacteriaceae</taxon>
        <taxon>Escherichia</taxon>
    </lineage>
</organism>
<name>TRUB_ECOLI</name>